<sequence>MSKTVVRKNESLEDALRRFKRSVSKTGTLAEARKREFYEKPSVKRKKKSEAARKRKF</sequence>
<comment type="similarity">
    <text evidence="1">Belongs to the bacterial ribosomal protein bS21 family.</text>
</comment>
<name>RS21_BACC7</name>
<reference key="1">
    <citation type="submission" date="2008-10" db="EMBL/GenBank/DDBJ databases">
        <title>Genome sequence of Bacillus cereus AH187.</title>
        <authorList>
            <person name="Dodson R.J."/>
            <person name="Durkin A.S."/>
            <person name="Rosovitz M.J."/>
            <person name="Rasko D.A."/>
            <person name="Kolsto A.B."/>
            <person name="Okstad O.A."/>
            <person name="Ravel J."/>
            <person name="Sutton G."/>
        </authorList>
    </citation>
    <scope>NUCLEOTIDE SEQUENCE [LARGE SCALE GENOMIC DNA]</scope>
    <source>
        <strain>AH187</strain>
    </source>
</reference>
<organism>
    <name type="scientific">Bacillus cereus (strain AH187)</name>
    <dbReference type="NCBI Taxonomy" id="405534"/>
    <lineage>
        <taxon>Bacteria</taxon>
        <taxon>Bacillati</taxon>
        <taxon>Bacillota</taxon>
        <taxon>Bacilli</taxon>
        <taxon>Bacillales</taxon>
        <taxon>Bacillaceae</taxon>
        <taxon>Bacillus</taxon>
        <taxon>Bacillus cereus group</taxon>
    </lineage>
</organism>
<evidence type="ECO:0000255" key="1">
    <source>
        <dbReference type="HAMAP-Rule" id="MF_00358"/>
    </source>
</evidence>
<evidence type="ECO:0000305" key="2"/>
<accession>B7HPK8</accession>
<protein>
    <recommendedName>
        <fullName evidence="1">Small ribosomal subunit protein bS21</fullName>
    </recommendedName>
    <alternativeName>
        <fullName evidence="2">30S ribosomal protein S21</fullName>
    </alternativeName>
</protein>
<keyword id="KW-0687">Ribonucleoprotein</keyword>
<keyword id="KW-0689">Ribosomal protein</keyword>
<proteinExistence type="inferred from homology"/>
<gene>
    <name evidence="1" type="primary">rpsU</name>
    <name type="ordered locus">BCAH187_A4442</name>
</gene>
<dbReference type="EMBL" id="CP001177">
    <property type="protein sequence ID" value="ACJ80265.1"/>
    <property type="molecule type" value="Genomic_DNA"/>
</dbReference>
<dbReference type="SMR" id="B7HPK8"/>
<dbReference type="KEGG" id="bcr:BCAH187_A4442"/>
<dbReference type="HOGENOM" id="CLU_159258_3_2_9"/>
<dbReference type="Proteomes" id="UP000002214">
    <property type="component" value="Chromosome"/>
</dbReference>
<dbReference type="GO" id="GO:1990904">
    <property type="term" value="C:ribonucleoprotein complex"/>
    <property type="evidence" value="ECO:0007669"/>
    <property type="project" value="UniProtKB-KW"/>
</dbReference>
<dbReference type="GO" id="GO:0005840">
    <property type="term" value="C:ribosome"/>
    <property type="evidence" value="ECO:0007669"/>
    <property type="project" value="UniProtKB-KW"/>
</dbReference>
<dbReference type="GO" id="GO:0003735">
    <property type="term" value="F:structural constituent of ribosome"/>
    <property type="evidence" value="ECO:0007669"/>
    <property type="project" value="InterPro"/>
</dbReference>
<dbReference type="GO" id="GO:0006412">
    <property type="term" value="P:translation"/>
    <property type="evidence" value="ECO:0007669"/>
    <property type="project" value="UniProtKB-UniRule"/>
</dbReference>
<dbReference type="Gene3D" id="1.20.5.1150">
    <property type="entry name" value="Ribosomal protein S8"/>
    <property type="match status" value="1"/>
</dbReference>
<dbReference type="HAMAP" id="MF_00358">
    <property type="entry name" value="Ribosomal_bS21"/>
    <property type="match status" value="1"/>
</dbReference>
<dbReference type="InterPro" id="IPR001911">
    <property type="entry name" value="Ribosomal_bS21"/>
</dbReference>
<dbReference type="InterPro" id="IPR018278">
    <property type="entry name" value="Ribosomal_bS21_CS"/>
</dbReference>
<dbReference type="InterPro" id="IPR038380">
    <property type="entry name" value="Ribosomal_bS21_sf"/>
</dbReference>
<dbReference type="NCBIfam" id="TIGR00030">
    <property type="entry name" value="S21p"/>
    <property type="match status" value="1"/>
</dbReference>
<dbReference type="PANTHER" id="PTHR21109">
    <property type="entry name" value="MITOCHONDRIAL 28S RIBOSOMAL PROTEIN S21"/>
    <property type="match status" value="1"/>
</dbReference>
<dbReference type="PANTHER" id="PTHR21109:SF22">
    <property type="entry name" value="SMALL RIBOSOMAL SUBUNIT PROTEIN BS21"/>
    <property type="match status" value="1"/>
</dbReference>
<dbReference type="Pfam" id="PF01165">
    <property type="entry name" value="Ribosomal_S21"/>
    <property type="match status" value="1"/>
</dbReference>
<dbReference type="PRINTS" id="PR00976">
    <property type="entry name" value="RIBOSOMALS21"/>
</dbReference>
<dbReference type="PROSITE" id="PS01181">
    <property type="entry name" value="RIBOSOMAL_S21"/>
    <property type="match status" value="1"/>
</dbReference>
<feature type="chain" id="PRO_1000120587" description="Small ribosomal subunit protein bS21">
    <location>
        <begin position="1"/>
        <end position="57"/>
    </location>
</feature>